<dbReference type="EC" id="2.4.99.17" evidence="1"/>
<dbReference type="EMBL" id="CP000026">
    <property type="protein sequence ID" value="AAV78204.1"/>
    <property type="molecule type" value="Genomic_DNA"/>
</dbReference>
<dbReference type="RefSeq" id="WP_001266531.1">
    <property type="nucleotide sequence ID" value="NC_006511.1"/>
</dbReference>
<dbReference type="SMR" id="Q5PFT5"/>
<dbReference type="KEGG" id="spt:SPA2319"/>
<dbReference type="HOGENOM" id="CLU_039110_1_0_6"/>
<dbReference type="UniPathway" id="UPA00392"/>
<dbReference type="Proteomes" id="UP000008185">
    <property type="component" value="Chromosome"/>
</dbReference>
<dbReference type="GO" id="GO:0005737">
    <property type="term" value="C:cytoplasm"/>
    <property type="evidence" value="ECO:0007669"/>
    <property type="project" value="UniProtKB-SubCell"/>
</dbReference>
<dbReference type="GO" id="GO:0051075">
    <property type="term" value="F:S-adenosylmethionine:tRNA ribosyltransferase-isomerase activity"/>
    <property type="evidence" value="ECO:0007669"/>
    <property type="project" value="UniProtKB-EC"/>
</dbReference>
<dbReference type="GO" id="GO:0008616">
    <property type="term" value="P:queuosine biosynthetic process"/>
    <property type="evidence" value="ECO:0007669"/>
    <property type="project" value="UniProtKB-UniRule"/>
</dbReference>
<dbReference type="GO" id="GO:0002099">
    <property type="term" value="P:tRNA wobble guanine modification"/>
    <property type="evidence" value="ECO:0007669"/>
    <property type="project" value="TreeGrafter"/>
</dbReference>
<dbReference type="FunFam" id="2.40.10.240:FF:000001">
    <property type="entry name" value="S-adenosylmethionine:tRNA ribosyltransferase-isomerase"/>
    <property type="match status" value="1"/>
</dbReference>
<dbReference type="FunFam" id="3.40.1780.10:FF:000001">
    <property type="entry name" value="S-adenosylmethionine:tRNA ribosyltransferase-isomerase"/>
    <property type="match status" value="1"/>
</dbReference>
<dbReference type="Gene3D" id="2.40.10.240">
    <property type="entry name" value="QueA-like"/>
    <property type="match status" value="1"/>
</dbReference>
<dbReference type="Gene3D" id="3.40.1780.10">
    <property type="entry name" value="QueA-like"/>
    <property type="match status" value="1"/>
</dbReference>
<dbReference type="HAMAP" id="MF_00113">
    <property type="entry name" value="QueA"/>
    <property type="match status" value="1"/>
</dbReference>
<dbReference type="InterPro" id="IPR003699">
    <property type="entry name" value="QueA"/>
</dbReference>
<dbReference type="InterPro" id="IPR042118">
    <property type="entry name" value="QueA_dom1"/>
</dbReference>
<dbReference type="InterPro" id="IPR042119">
    <property type="entry name" value="QueA_dom2"/>
</dbReference>
<dbReference type="InterPro" id="IPR036100">
    <property type="entry name" value="QueA_sf"/>
</dbReference>
<dbReference type="NCBIfam" id="NF001140">
    <property type="entry name" value="PRK00147.1"/>
    <property type="match status" value="1"/>
</dbReference>
<dbReference type="NCBIfam" id="TIGR00113">
    <property type="entry name" value="queA"/>
    <property type="match status" value="1"/>
</dbReference>
<dbReference type="PANTHER" id="PTHR30307">
    <property type="entry name" value="S-ADENOSYLMETHIONINE:TRNA RIBOSYLTRANSFERASE-ISOMERASE"/>
    <property type="match status" value="1"/>
</dbReference>
<dbReference type="PANTHER" id="PTHR30307:SF0">
    <property type="entry name" value="S-ADENOSYLMETHIONINE:TRNA RIBOSYLTRANSFERASE-ISOMERASE"/>
    <property type="match status" value="1"/>
</dbReference>
<dbReference type="Pfam" id="PF02547">
    <property type="entry name" value="Queuosine_synth"/>
    <property type="match status" value="1"/>
</dbReference>
<dbReference type="SUPFAM" id="SSF111337">
    <property type="entry name" value="QueA-like"/>
    <property type="match status" value="1"/>
</dbReference>
<organism>
    <name type="scientific">Salmonella paratyphi A (strain ATCC 9150 / SARB42)</name>
    <dbReference type="NCBI Taxonomy" id="295319"/>
    <lineage>
        <taxon>Bacteria</taxon>
        <taxon>Pseudomonadati</taxon>
        <taxon>Pseudomonadota</taxon>
        <taxon>Gammaproteobacteria</taxon>
        <taxon>Enterobacterales</taxon>
        <taxon>Enterobacteriaceae</taxon>
        <taxon>Salmonella</taxon>
    </lineage>
</organism>
<sequence length="354" mass="39284">MRVTDFSFELPESLIAHYPQPERSRCRLLSLEGPTGALTHGTFTDLLDKLNPGDLLVFNNTRVIPARLFGRKASGGKIEVLVERMLDDKRILAHIRASKAPKPGTELLLGDDESIHATMTARHGALFEVEFNDPRPVLDILNAIGHMPLPPYIDRPDEDADRELYQTVYSEKPGAVAAPTAGLHFDEPLLAALREKGVEMAFVTLHVGAGTFQPVRVDTIEDHIMHSEYAEVPQEVVDAVLAAKARGNRVIAVGTTSVRSLESAAQAAKSDLIEPFFGDTQIFIYPGYQYKVIDALITNFHLPESTLIMLVSAFAGYQHTMNAYKTAVEQKYRFFSYGDAMFITYNPRAISERP</sequence>
<keyword id="KW-0963">Cytoplasm</keyword>
<keyword id="KW-0671">Queuosine biosynthesis</keyword>
<keyword id="KW-0949">S-adenosyl-L-methionine</keyword>
<keyword id="KW-0808">Transferase</keyword>
<feature type="chain" id="PRO_0000231370" description="S-adenosylmethionine:tRNA ribosyltransferase-isomerase">
    <location>
        <begin position="1"/>
        <end position="354"/>
    </location>
</feature>
<gene>
    <name evidence="1" type="primary">queA</name>
    <name type="ordered locus">SPA2319</name>
</gene>
<name>QUEA_SALPA</name>
<comment type="function">
    <text evidence="1">Transfers and isomerizes the ribose moiety from AdoMet to the 7-aminomethyl group of 7-deazaguanine (preQ1-tRNA) to give epoxyqueuosine (oQ-tRNA).</text>
</comment>
<comment type="catalytic activity">
    <reaction evidence="1">
        <text>7-aminomethyl-7-carbaguanosine(34) in tRNA + S-adenosyl-L-methionine = epoxyqueuosine(34) in tRNA + adenine + L-methionine + 2 H(+)</text>
        <dbReference type="Rhea" id="RHEA:32155"/>
        <dbReference type="Rhea" id="RHEA-COMP:10342"/>
        <dbReference type="Rhea" id="RHEA-COMP:18582"/>
        <dbReference type="ChEBI" id="CHEBI:15378"/>
        <dbReference type="ChEBI" id="CHEBI:16708"/>
        <dbReference type="ChEBI" id="CHEBI:57844"/>
        <dbReference type="ChEBI" id="CHEBI:59789"/>
        <dbReference type="ChEBI" id="CHEBI:82833"/>
        <dbReference type="ChEBI" id="CHEBI:194443"/>
        <dbReference type="EC" id="2.4.99.17"/>
    </reaction>
</comment>
<comment type="pathway">
    <text evidence="1">tRNA modification; tRNA-queuosine biosynthesis.</text>
</comment>
<comment type="subunit">
    <text evidence="1">Monomer.</text>
</comment>
<comment type="subcellular location">
    <subcellularLocation>
        <location evidence="1">Cytoplasm</location>
    </subcellularLocation>
</comment>
<comment type="similarity">
    <text evidence="1">Belongs to the QueA family.</text>
</comment>
<protein>
    <recommendedName>
        <fullName evidence="1">S-adenosylmethionine:tRNA ribosyltransferase-isomerase</fullName>
        <ecNumber evidence="1">2.4.99.17</ecNumber>
    </recommendedName>
    <alternativeName>
        <fullName evidence="1">Queuosine biosynthesis protein QueA</fullName>
    </alternativeName>
</protein>
<evidence type="ECO:0000255" key="1">
    <source>
        <dbReference type="HAMAP-Rule" id="MF_00113"/>
    </source>
</evidence>
<proteinExistence type="inferred from homology"/>
<reference key="1">
    <citation type="journal article" date="2004" name="Nat. Genet.">
        <title>Comparison of genome degradation in Paratyphi A and Typhi, human-restricted serovars of Salmonella enterica that cause typhoid.</title>
        <authorList>
            <person name="McClelland M."/>
            <person name="Sanderson K.E."/>
            <person name="Clifton S.W."/>
            <person name="Latreille P."/>
            <person name="Porwollik S."/>
            <person name="Sabo A."/>
            <person name="Meyer R."/>
            <person name="Bieri T."/>
            <person name="Ozersky P."/>
            <person name="McLellan M."/>
            <person name="Harkins C.R."/>
            <person name="Wang C."/>
            <person name="Nguyen C."/>
            <person name="Berghoff A."/>
            <person name="Elliott G."/>
            <person name="Kohlberg S."/>
            <person name="Strong C."/>
            <person name="Du F."/>
            <person name="Carter J."/>
            <person name="Kremizki C."/>
            <person name="Layman D."/>
            <person name="Leonard S."/>
            <person name="Sun H."/>
            <person name="Fulton L."/>
            <person name="Nash W."/>
            <person name="Miner T."/>
            <person name="Minx P."/>
            <person name="Delehaunty K."/>
            <person name="Fronick C."/>
            <person name="Magrini V."/>
            <person name="Nhan M."/>
            <person name="Warren W."/>
            <person name="Florea L."/>
            <person name="Spieth J."/>
            <person name="Wilson R.K."/>
        </authorList>
    </citation>
    <scope>NUCLEOTIDE SEQUENCE [LARGE SCALE GENOMIC DNA]</scope>
    <source>
        <strain>ATCC 9150 / SARB42</strain>
    </source>
</reference>
<accession>Q5PFT5</accession>